<proteinExistence type="inferred from homology"/>
<sequence>MKTLNRRDFPGAQYPERIIQFGEGNFLRAFVDWQIDLLNEHTDLNSGVVVVRPIETSFPPSLSTQDGLYTTIIRGLNEKGEAVSDARLIRSVNREISVYSEYDEFLKLAHNPEMRFVFSNTTEAGISYHAGDKFDDAPAVSYPAKLTRLLFERFSHFNGALDKGWIIIPCELIDYNGDALRELVLRYAQEWALPEAFIQWLDQANSFCSTLVDRIVTGYPRDEVAKLEEELGYHDGFLDTAEHFYLFVIQGPKSLATELRLDKYPLNVLIVDDIKPYKERKVAILNGAHTALVPVAFQAGLDTVGEAMNDAEICAFVEKAIYEEIIPVLDLPRDELESFASAVTGRFRNPYIKHQLLSIALNGMTKFRTRILPQLLAGQKAKGTLPARLTFALAALIAFYRGERNGETYPVQDDAHWLERYQQLWSQHRDRVIGTQELVAIVLAEKDHWEQDLTQVPGLVEQVANDLDAILEKGMREAVRPLC</sequence>
<comment type="catalytic activity">
    <reaction evidence="1">
        <text>D-altronate + NAD(+) = keto-D-tagaturonate + NADH + H(+)</text>
        <dbReference type="Rhea" id="RHEA:17813"/>
        <dbReference type="ChEBI" id="CHEBI:15378"/>
        <dbReference type="ChEBI" id="CHEBI:17360"/>
        <dbReference type="ChEBI" id="CHEBI:17886"/>
        <dbReference type="ChEBI" id="CHEBI:57540"/>
        <dbReference type="ChEBI" id="CHEBI:57945"/>
        <dbReference type="EC" id="1.1.1.58"/>
    </reaction>
</comment>
<comment type="pathway">
    <text evidence="1">Carbohydrate metabolism; pentose and glucuronate interconversion.</text>
</comment>
<comment type="similarity">
    <text evidence="1">Belongs to the mannitol dehydrogenase family. UxaB subfamily.</text>
</comment>
<protein>
    <recommendedName>
        <fullName evidence="1">Altronate oxidoreductase</fullName>
        <ecNumber evidence="1">1.1.1.58</ecNumber>
    </recommendedName>
    <alternativeName>
        <fullName evidence="1">Tagaturonate dehydrogenase</fullName>
    </alternativeName>
    <alternativeName>
        <fullName evidence="1">Tagaturonate reductase</fullName>
    </alternativeName>
</protein>
<evidence type="ECO:0000255" key="1">
    <source>
        <dbReference type="HAMAP-Rule" id="MF_00670"/>
    </source>
</evidence>
<accession>B1IRT9</accession>
<reference key="1">
    <citation type="submission" date="2008-02" db="EMBL/GenBank/DDBJ databases">
        <title>Complete sequence of Escherichia coli C str. ATCC 8739.</title>
        <authorList>
            <person name="Copeland A."/>
            <person name="Lucas S."/>
            <person name="Lapidus A."/>
            <person name="Glavina del Rio T."/>
            <person name="Dalin E."/>
            <person name="Tice H."/>
            <person name="Bruce D."/>
            <person name="Goodwin L."/>
            <person name="Pitluck S."/>
            <person name="Kiss H."/>
            <person name="Brettin T."/>
            <person name="Detter J.C."/>
            <person name="Han C."/>
            <person name="Kuske C.R."/>
            <person name="Schmutz J."/>
            <person name="Larimer F."/>
            <person name="Land M."/>
            <person name="Hauser L."/>
            <person name="Kyrpides N."/>
            <person name="Mikhailova N."/>
            <person name="Ingram L."/>
            <person name="Richardson P."/>
        </authorList>
    </citation>
    <scope>NUCLEOTIDE SEQUENCE [LARGE SCALE GENOMIC DNA]</scope>
    <source>
        <strain>ATCC 8739 / DSM 1576 / NBRC 3972 / NCIMB 8545 / WDCM 00012 / Crooks</strain>
    </source>
</reference>
<gene>
    <name evidence="1" type="primary">uxaB</name>
    <name type="ordered locus">EcolC_2137</name>
</gene>
<keyword id="KW-0520">NAD</keyword>
<keyword id="KW-0560">Oxidoreductase</keyword>
<dbReference type="EC" id="1.1.1.58" evidence="1"/>
<dbReference type="EMBL" id="CP000946">
    <property type="protein sequence ID" value="ACA77777.1"/>
    <property type="molecule type" value="Genomic_DNA"/>
</dbReference>
<dbReference type="RefSeq" id="WP_000854624.1">
    <property type="nucleotide sequence ID" value="NZ_MTFT01000006.1"/>
</dbReference>
<dbReference type="SMR" id="B1IRT9"/>
<dbReference type="GeneID" id="75202151"/>
<dbReference type="KEGG" id="ecl:EcolC_2137"/>
<dbReference type="HOGENOM" id="CLU_027324_1_0_6"/>
<dbReference type="UniPathway" id="UPA00246"/>
<dbReference type="GO" id="GO:0005829">
    <property type="term" value="C:cytosol"/>
    <property type="evidence" value="ECO:0007669"/>
    <property type="project" value="TreeGrafter"/>
</dbReference>
<dbReference type="GO" id="GO:0008926">
    <property type="term" value="F:mannitol-1-phosphate 5-dehydrogenase activity"/>
    <property type="evidence" value="ECO:0007669"/>
    <property type="project" value="TreeGrafter"/>
</dbReference>
<dbReference type="GO" id="GO:0009026">
    <property type="term" value="F:tagaturonate reductase activity"/>
    <property type="evidence" value="ECO:0007669"/>
    <property type="project" value="UniProtKB-UniRule"/>
</dbReference>
<dbReference type="GO" id="GO:0019698">
    <property type="term" value="P:D-galacturonate catabolic process"/>
    <property type="evidence" value="ECO:0007669"/>
    <property type="project" value="TreeGrafter"/>
</dbReference>
<dbReference type="GO" id="GO:0019592">
    <property type="term" value="P:mannitol catabolic process"/>
    <property type="evidence" value="ECO:0007669"/>
    <property type="project" value="TreeGrafter"/>
</dbReference>
<dbReference type="FunFam" id="1.10.1040.10:FF:000018">
    <property type="entry name" value="Altronate oxidoreductase"/>
    <property type="match status" value="1"/>
</dbReference>
<dbReference type="FunFam" id="3.40.50.720:FF:000153">
    <property type="entry name" value="Altronate oxidoreductase"/>
    <property type="match status" value="1"/>
</dbReference>
<dbReference type="Gene3D" id="1.10.1040.10">
    <property type="entry name" value="N-(1-d-carboxylethyl)-l-norvaline Dehydrogenase, domain 2"/>
    <property type="match status" value="1"/>
</dbReference>
<dbReference type="Gene3D" id="3.40.50.720">
    <property type="entry name" value="NAD(P)-binding Rossmann-like Domain"/>
    <property type="match status" value="1"/>
</dbReference>
<dbReference type="HAMAP" id="MF_00670">
    <property type="entry name" value="Altron_oxidoreduct"/>
    <property type="match status" value="1"/>
</dbReference>
<dbReference type="InterPro" id="IPR008927">
    <property type="entry name" value="6-PGluconate_DH-like_C_sf"/>
</dbReference>
<dbReference type="InterPro" id="IPR013328">
    <property type="entry name" value="6PGD_dom2"/>
</dbReference>
<dbReference type="InterPro" id="IPR023668">
    <property type="entry name" value="Altronate_OxRdtase"/>
</dbReference>
<dbReference type="InterPro" id="IPR013118">
    <property type="entry name" value="Mannitol_DH_C"/>
</dbReference>
<dbReference type="InterPro" id="IPR013131">
    <property type="entry name" value="Mannitol_DH_N"/>
</dbReference>
<dbReference type="InterPro" id="IPR036291">
    <property type="entry name" value="NAD(P)-bd_dom_sf"/>
</dbReference>
<dbReference type="NCBIfam" id="NF002969">
    <property type="entry name" value="PRK03643.1"/>
    <property type="match status" value="1"/>
</dbReference>
<dbReference type="PANTHER" id="PTHR30524:SF0">
    <property type="entry name" value="ALTRONATE OXIDOREDUCTASE-RELATED"/>
    <property type="match status" value="1"/>
</dbReference>
<dbReference type="PANTHER" id="PTHR30524">
    <property type="entry name" value="MANNITOL-1-PHOSPHATE 5-DEHYDROGENASE"/>
    <property type="match status" value="1"/>
</dbReference>
<dbReference type="Pfam" id="PF01232">
    <property type="entry name" value="Mannitol_dh"/>
    <property type="match status" value="1"/>
</dbReference>
<dbReference type="Pfam" id="PF08125">
    <property type="entry name" value="Mannitol_dh_C"/>
    <property type="match status" value="1"/>
</dbReference>
<dbReference type="SUPFAM" id="SSF48179">
    <property type="entry name" value="6-phosphogluconate dehydrogenase C-terminal domain-like"/>
    <property type="match status" value="1"/>
</dbReference>
<dbReference type="SUPFAM" id="SSF51735">
    <property type="entry name" value="NAD(P)-binding Rossmann-fold domains"/>
    <property type="match status" value="1"/>
</dbReference>
<organism>
    <name type="scientific">Escherichia coli (strain ATCC 8739 / DSM 1576 / NBRC 3972 / NCIMB 8545 / WDCM 00012 / Crooks)</name>
    <dbReference type="NCBI Taxonomy" id="481805"/>
    <lineage>
        <taxon>Bacteria</taxon>
        <taxon>Pseudomonadati</taxon>
        <taxon>Pseudomonadota</taxon>
        <taxon>Gammaproteobacteria</taxon>
        <taxon>Enterobacterales</taxon>
        <taxon>Enterobacteriaceae</taxon>
        <taxon>Escherichia</taxon>
    </lineage>
</organism>
<name>UXAB_ECOLC</name>
<feature type="chain" id="PRO_1000082939" description="Altronate oxidoreductase">
    <location>
        <begin position="1"/>
        <end position="483"/>
    </location>
</feature>
<feature type="binding site" evidence="1">
    <location>
        <begin position="18"/>
        <end position="29"/>
    </location>
    <ligand>
        <name>NAD(+)</name>
        <dbReference type="ChEBI" id="CHEBI:57540"/>
    </ligand>
</feature>